<feature type="chain" id="PRO_0000047392" description="Zinc finger protein 80">
    <location>
        <begin position="1"/>
        <end position="293"/>
    </location>
</feature>
<feature type="zinc finger region" description="C2H2-type 1" evidence="1">
    <location>
        <begin position="69"/>
        <end position="91"/>
    </location>
</feature>
<feature type="zinc finger region" description="C2H2-type 2" evidence="1">
    <location>
        <begin position="97"/>
        <end position="119"/>
    </location>
</feature>
<feature type="zinc finger region" description="C2H2-type 3; atypical" evidence="1">
    <location>
        <begin position="125"/>
        <end position="147"/>
    </location>
</feature>
<feature type="zinc finger region" description="C2H2-type 4" evidence="1">
    <location>
        <begin position="153"/>
        <end position="175"/>
    </location>
</feature>
<feature type="zinc finger region" description="C2H2-type 5" evidence="1">
    <location>
        <begin position="181"/>
        <end position="203"/>
    </location>
</feature>
<feature type="zinc finger region" description="C2H2-type 6" evidence="1">
    <location>
        <begin position="209"/>
        <end position="231"/>
    </location>
</feature>
<feature type="zinc finger region" description="C2H2-type 7" evidence="1">
    <location>
        <begin position="237"/>
        <end position="259"/>
    </location>
</feature>
<protein>
    <recommendedName>
        <fullName>Zinc finger protein 80</fullName>
    </recommendedName>
</protein>
<proteinExistence type="inferred from homology"/>
<evidence type="ECO:0000255" key="1">
    <source>
        <dbReference type="PROSITE-ProRule" id="PRU00042"/>
    </source>
</evidence>
<evidence type="ECO:0000305" key="2"/>
<reference key="1">
    <citation type="journal article" date="1995" name="Virology">
        <title>Mobilization of an ERV9 human endogenous retroviral element during primate evolution.</title>
        <authorList>
            <person name="di Cristofano A."/>
            <person name="Strazzullo M."/>
            <person name="Parisi T."/>
            <person name="la Mantia G."/>
        </authorList>
    </citation>
    <scope>NUCLEOTIDE SEQUENCE [GENOMIC DNA]</scope>
</reference>
<accession>P51505</accession>
<dbReference type="EMBL" id="X89629">
    <property type="protein sequence ID" value="CAA61771.1"/>
    <property type="molecule type" value="Genomic_DNA"/>
</dbReference>
<dbReference type="SMR" id="P51505"/>
<dbReference type="InParanoid" id="P51505"/>
<dbReference type="Proteomes" id="UP000006718">
    <property type="component" value="Unassembled WGS sequence"/>
</dbReference>
<dbReference type="GO" id="GO:0005634">
    <property type="term" value="C:nucleus"/>
    <property type="evidence" value="ECO:0000318"/>
    <property type="project" value="GO_Central"/>
</dbReference>
<dbReference type="GO" id="GO:0000981">
    <property type="term" value="F:DNA-binding transcription factor activity, RNA polymerase II-specific"/>
    <property type="evidence" value="ECO:0000318"/>
    <property type="project" value="GO_Central"/>
</dbReference>
<dbReference type="GO" id="GO:0000977">
    <property type="term" value="F:RNA polymerase II transcription regulatory region sequence-specific DNA binding"/>
    <property type="evidence" value="ECO:0000318"/>
    <property type="project" value="GO_Central"/>
</dbReference>
<dbReference type="GO" id="GO:0008270">
    <property type="term" value="F:zinc ion binding"/>
    <property type="evidence" value="ECO:0007669"/>
    <property type="project" value="UniProtKB-KW"/>
</dbReference>
<dbReference type="GO" id="GO:0006357">
    <property type="term" value="P:regulation of transcription by RNA polymerase II"/>
    <property type="evidence" value="ECO:0000318"/>
    <property type="project" value="GO_Central"/>
</dbReference>
<dbReference type="FunFam" id="3.30.160.60:FF:000608">
    <property type="entry name" value="zinc finger protein 286A isoform X1"/>
    <property type="match status" value="1"/>
</dbReference>
<dbReference type="FunFam" id="3.30.160.60:FF:002017">
    <property type="entry name" value="Zinc finger protein 599"/>
    <property type="match status" value="1"/>
</dbReference>
<dbReference type="FunFam" id="3.30.160.60:FF:002341">
    <property type="entry name" value="Zinc finger protein 80"/>
    <property type="match status" value="1"/>
</dbReference>
<dbReference type="FunFam" id="3.30.160.60:FF:002593">
    <property type="entry name" value="Zinc finger protein 80"/>
    <property type="match status" value="2"/>
</dbReference>
<dbReference type="FunFam" id="3.30.160.60:FF:000275">
    <property type="entry name" value="zinc finger protein 90 homolog"/>
    <property type="match status" value="1"/>
</dbReference>
<dbReference type="FunFam" id="3.30.160.60:FF:001111">
    <property type="entry name" value="Zinc finger protein 92 homolog"/>
    <property type="match status" value="1"/>
</dbReference>
<dbReference type="Gene3D" id="3.30.160.60">
    <property type="entry name" value="Classic Zinc Finger"/>
    <property type="match status" value="8"/>
</dbReference>
<dbReference type="InterPro" id="IPR050758">
    <property type="entry name" value="Znf_C2H2-type"/>
</dbReference>
<dbReference type="InterPro" id="IPR036236">
    <property type="entry name" value="Znf_C2H2_sf"/>
</dbReference>
<dbReference type="InterPro" id="IPR013087">
    <property type="entry name" value="Znf_C2H2_type"/>
</dbReference>
<dbReference type="PANTHER" id="PTHR23234:SF10">
    <property type="entry name" value="RIKEN CDNA 6720489N17 GENE-RELATED"/>
    <property type="match status" value="1"/>
</dbReference>
<dbReference type="PANTHER" id="PTHR23234">
    <property type="entry name" value="ZNF44 PROTEIN"/>
    <property type="match status" value="1"/>
</dbReference>
<dbReference type="Pfam" id="PF00096">
    <property type="entry name" value="zf-C2H2"/>
    <property type="match status" value="4"/>
</dbReference>
<dbReference type="Pfam" id="PF13465">
    <property type="entry name" value="zf-H2C2_2"/>
    <property type="match status" value="1"/>
</dbReference>
<dbReference type="SMART" id="SM00355">
    <property type="entry name" value="ZnF_C2H2"/>
    <property type="match status" value="6"/>
</dbReference>
<dbReference type="SUPFAM" id="SSF57667">
    <property type="entry name" value="beta-beta-alpha zinc fingers"/>
    <property type="match status" value="4"/>
</dbReference>
<dbReference type="PROSITE" id="PS00028">
    <property type="entry name" value="ZINC_FINGER_C2H2_1"/>
    <property type="match status" value="6"/>
</dbReference>
<dbReference type="PROSITE" id="PS50157">
    <property type="entry name" value="ZINC_FINGER_C2H2_2"/>
    <property type="match status" value="7"/>
</dbReference>
<organism>
    <name type="scientific">Macaca mulatta</name>
    <name type="common">Rhesus macaque</name>
    <dbReference type="NCBI Taxonomy" id="9544"/>
    <lineage>
        <taxon>Eukaryota</taxon>
        <taxon>Metazoa</taxon>
        <taxon>Chordata</taxon>
        <taxon>Craniata</taxon>
        <taxon>Vertebrata</taxon>
        <taxon>Euteleostomi</taxon>
        <taxon>Mammalia</taxon>
        <taxon>Eutheria</taxon>
        <taxon>Euarchontoglires</taxon>
        <taxon>Primates</taxon>
        <taxon>Haplorrhini</taxon>
        <taxon>Catarrhini</taxon>
        <taxon>Cercopithecidae</taxon>
        <taxon>Cercopithecinae</taxon>
        <taxon>Macaca</taxon>
    </lineage>
</organism>
<gene>
    <name type="primary">ZNF80</name>
</gene>
<name>ZNF80_MACMU</name>
<comment type="function">
    <text>May be involved in transcriptional regulation.</text>
</comment>
<comment type="subcellular location">
    <subcellularLocation>
        <location evidence="2">Nucleus</location>
    </subcellularLocation>
</comment>
<comment type="similarity">
    <text evidence="2">Belongs to the krueppel C2H2-type zinc-finger protein family.</text>
</comment>
<keyword id="KW-0238">DNA-binding</keyword>
<keyword id="KW-0479">Metal-binding</keyword>
<keyword id="KW-0539">Nucleus</keyword>
<keyword id="KW-1185">Reference proteome</keyword>
<keyword id="KW-0677">Repeat</keyword>
<keyword id="KW-0804">Transcription</keyword>
<keyword id="KW-0805">Transcription regulation</keyword>
<keyword id="KW-0862">Zinc</keyword>
<keyword id="KW-0863">Zinc-finger</keyword>
<sequence length="293" mass="33566">MQKGPLSLATVSHTETFWRKVGPKRDGLGTGDGLHSWVLQEPVSTGDNPRECDSQGTSKDTLVREGKTYKCKECGKVFNKNSLLVRHHQIHAGVKTYECQECGKAFHEKVDFVRHMRIHSGEKPCKCVECGKVFNRRSHLLCYHQIHTGEKPYECSECGKTFSYHSVFIQHRMTHTGEKLFGCKECGKTFYYNSSLTRHMKIHTGEKPYKCGECGKTFTYHSVFFRHSMTHTAGKPYECKECGKGFYYSYSLTRHTRSHTGEKPYECLEHRKAFGYHSAFAQQSKIHSGGKNL</sequence>